<gene>
    <name type="primary">glpK</name>
    <name type="synonym">gylA</name>
</gene>
<dbReference type="EC" id="2.7.1.30"/>
<dbReference type="EMBL" id="M37327">
    <property type="protein sequence ID" value="AAA26751.1"/>
    <property type="molecule type" value="mRNA"/>
</dbReference>
<dbReference type="PIR" id="PQ0058">
    <property type="entry name" value="PQ0058"/>
</dbReference>
<dbReference type="UniPathway" id="UPA00618">
    <property type="reaction ID" value="UER00672"/>
</dbReference>
<dbReference type="GO" id="GO:0005524">
    <property type="term" value="F:ATP binding"/>
    <property type="evidence" value="ECO:0007669"/>
    <property type="project" value="UniProtKB-KW"/>
</dbReference>
<dbReference type="GO" id="GO:0004370">
    <property type="term" value="F:glycerol kinase activity"/>
    <property type="evidence" value="ECO:0000250"/>
    <property type="project" value="UniProtKB"/>
</dbReference>
<dbReference type="GO" id="GO:0019563">
    <property type="term" value="P:glycerol catabolic process"/>
    <property type="evidence" value="ECO:0007669"/>
    <property type="project" value="UniProtKB-UniPathway"/>
</dbReference>
<dbReference type="GO" id="GO:0006071">
    <property type="term" value="P:glycerol metabolic process"/>
    <property type="evidence" value="ECO:0000250"/>
    <property type="project" value="UniProtKB"/>
</dbReference>
<accession>P25013</accession>
<name>GLPK_STRGR</name>
<keyword id="KW-0067">ATP-binding</keyword>
<keyword id="KW-0319">Glycerol metabolism</keyword>
<keyword id="KW-0418">Kinase</keyword>
<keyword id="KW-0547">Nucleotide-binding</keyword>
<keyword id="KW-0808">Transferase</keyword>
<protein>
    <recommendedName>
        <fullName>Glycerol kinase</fullName>
        <ecNumber>2.7.1.30</ecNumber>
    </recommendedName>
    <alternativeName>
        <fullName>ATP:glycerol 3-phosphotransferase</fullName>
    </alternativeName>
    <alternativeName>
        <fullName>Glycerokinase</fullName>
        <shortName>GK</shortName>
    </alternativeName>
</protein>
<reference key="1">
    <citation type="journal article" date="1990" name="Gene">
        <title>Nucleotide sequence of the putative regulatory gene and major promoter region of the Streptomyces griseus glycerol operon.</title>
        <authorList>
            <person name="Bolotin A."/>
            <person name="Biro S."/>
        </authorList>
    </citation>
    <scope>NUCLEOTIDE SEQUENCE [MRNA]</scope>
</reference>
<organism>
    <name type="scientific">Streptomyces griseus</name>
    <dbReference type="NCBI Taxonomy" id="1911"/>
    <lineage>
        <taxon>Bacteria</taxon>
        <taxon>Bacillati</taxon>
        <taxon>Actinomycetota</taxon>
        <taxon>Actinomycetes</taxon>
        <taxon>Kitasatosporales</taxon>
        <taxon>Streptomycetaceae</taxon>
        <taxon>Streptomyces</taxon>
    </lineage>
</organism>
<comment type="function">
    <text evidence="1">Key enzyme in the regulation of glycerol uptake and metabolism. Catalyzes the phosphorylation of glycerol to yield sn-glycerol 3-phosphate (By similarity).</text>
</comment>
<comment type="catalytic activity">
    <reaction>
        <text>glycerol + ATP = sn-glycerol 3-phosphate + ADP + H(+)</text>
        <dbReference type="Rhea" id="RHEA:21644"/>
        <dbReference type="ChEBI" id="CHEBI:15378"/>
        <dbReference type="ChEBI" id="CHEBI:17754"/>
        <dbReference type="ChEBI" id="CHEBI:30616"/>
        <dbReference type="ChEBI" id="CHEBI:57597"/>
        <dbReference type="ChEBI" id="CHEBI:456216"/>
        <dbReference type="EC" id="2.7.1.30"/>
    </reaction>
</comment>
<comment type="activity regulation">
    <text evidence="1">Inhibited by fructose 1,6-bisphosphate (FBP).</text>
</comment>
<comment type="pathway">
    <text>Polyol metabolism; glycerol degradation via glycerol kinase pathway; sn-glycerol 3-phosphate from glycerol: step 1/1.</text>
</comment>
<comment type="similarity">
    <text evidence="2">Belongs to the FGGY kinase family.</text>
</comment>
<feature type="chain" id="PRO_0000059504" description="Glycerol kinase">
    <location>
        <begin position="1"/>
        <end position="14" status="greater than"/>
    </location>
</feature>
<feature type="non-terminal residue">
    <location>
        <position position="14"/>
    </location>
</feature>
<proteinExistence type="evidence at transcript level"/>
<sequence>MSSSHIFIGETIGT</sequence>
<evidence type="ECO:0000250" key="1"/>
<evidence type="ECO:0000305" key="2"/>